<dbReference type="EC" id="3.6.-.-" evidence="1"/>
<dbReference type="EMBL" id="AE004969">
    <property type="protein sequence ID" value="AAW90708.1"/>
    <property type="molecule type" value="Genomic_DNA"/>
</dbReference>
<dbReference type="RefSeq" id="WP_003687082.1">
    <property type="nucleotide sequence ID" value="NC_002946.2"/>
</dbReference>
<dbReference type="RefSeq" id="YP_209120.1">
    <property type="nucleotide sequence ID" value="NC_002946.2"/>
</dbReference>
<dbReference type="SMR" id="Q5F529"/>
<dbReference type="STRING" id="242231.NGO_2107"/>
<dbReference type="GeneID" id="66754435"/>
<dbReference type="KEGG" id="ngo:NGO_2107"/>
<dbReference type="PATRIC" id="fig|242231.10.peg.2549"/>
<dbReference type="HOGENOM" id="CLU_019624_4_1_4"/>
<dbReference type="Proteomes" id="UP000000535">
    <property type="component" value="Chromosome"/>
</dbReference>
<dbReference type="GO" id="GO:0005829">
    <property type="term" value="C:cytosol"/>
    <property type="evidence" value="ECO:0007669"/>
    <property type="project" value="TreeGrafter"/>
</dbReference>
<dbReference type="GO" id="GO:0005525">
    <property type="term" value="F:GTP binding"/>
    <property type="evidence" value="ECO:0007669"/>
    <property type="project" value="UniProtKB-UniRule"/>
</dbReference>
<dbReference type="GO" id="GO:0003924">
    <property type="term" value="F:GTPase activity"/>
    <property type="evidence" value="ECO:0007669"/>
    <property type="project" value="UniProtKB-UniRule"/>
</dbReference>
<dbReference type="GO" id="GO:0046872">
    <property type="term" value="F:metal ion binding"/>
    <property type="evidence" value="ECO:0007669"/>
    <property type="project" value="UniProtKB-KW"/>
</dbReference>
<dbReference type="GO" id="GO:0030488">
    <property type="term" value="P:tRNA methylation"/>
    <property type="evidence" value="ECO:0007669"/>
    <property type="project" value="TreeGrafter"/>
</dbReference>
<dbReference type="GO" id="GO:0002098">
    <property type="term" value="P:tRNA wobble uridine modification"/>
    <property type="evidence" value="ECO:0007669"/>
    <property type="project" value="TreeGrafter"/>
</dbReference>
<dbReference type="CDD" id="cd04164">
    <property type="entry name" value="trmE"/>
    <property type="match status" value="1"/>
</dbReference>
<dbReference type="CDD" id="cd14858">
    <property type="entry name" value="TrmE_N"/>
    <property type="match status" value="1"/>
</dbReference>
<dbReference type="FunFam" id="3.30.1360.120:FF:000001">
    <property type="entry name" value="tRNA modification GTPase MnmE"/>
    <property type="match status" value="1"/>
</dbReference>
<dbReference type="FunFam" id="3.40.50.300:FF:001376">
    <property type="entry name" value="tRNA modification GTPase MnmE"/>
    <property type="match status" value="1"/>
</dbReference>
<dbReference type="Gene3D" id="3.40.50.300">
    <property type="entry name" value="P-loop containing nucleotide triphosphate hydrolases"/>
    <property type="match status" value="1"/>
</dbReference>
<dbReference type="Gene3D" id="3.30.1360.120">
    <property type="entry name" value="Probable tRNA modification gtpase trme, domain 1"/>
    <property type="match status" value="1"/>
</dbReference>
<dbReference type="Gene3D" id="1.20.120.430">
    <property type="entry name" value="tRNA modification GTPase MnmE domain 2"/>
    <property type="match status" value="1"/>
</dbReference>
<dbReference type="HAMAP" id="MF_00379">
    <property type="entry name" value="GTPase_MnmE"/>
    <property type="match status" value="1"/>
</dbReference>
<dbReference type="InterPro" id="IPR031168">
    <property type="entry name" value="G_TrmE"/>
</dbReference>
<dbReference type="InterPro" id="IPR006073">
    <property type="entry name" value="GTP-bd"/>
</dbReference>
<dbReference type="InterPro" id="IPR018948">
    <property type="entry name" value="GTP-bd_TrmE_N"/>
</dbReference>
<dbReference type="InterPro" id="IPR004520">
    <property type="entry name" value="GTPase_MnmE"/>
</dbReference>
<dbReference type="InterPro" id="IPR027368">
    <property type="entry name" value="MnmE_dom2"/>
</dbReference>
<dbReference type="InterPro" id="IPR025867">
    <property type="entry name" value="MnmE_helical"/>
</dbReference>
<dbReference type="InterPro" id="IPR027417">
    <property type="entry name" value="P-loop_NTPase"/>
</dbReference>
<dbReference type="InterPro" id="IPR005225">
    <property type="entry name" value="Small_GTP-bd"/>
</dbReference>
<dbReference type="InterPro" id="IPR027266">
    <property type="entry name" value="TrmE/GcvT_dom1"/>
</dbReference>
<dbReference type="NCBIfam" id="TIGR00450">
    <property type="entry name" value="mnmE_trmE_thdF"/>
    <property type="match status" value="1"/>
</dbReference>
<dbReference type="NCBIfam" id="NF003661">
    <property type="entry name" value="PRK05291.1-3"/>
    <property type="match status" value="1"/>
</dbReference>
<dbReference type="NCBIfam" id="TIGR00231">
    <property type="entry name" value="small_GTP"/>
    <property type="match status" value="1"/>
</dbReference>
<dbReference type="PANTHER" id="PTHR42714">
    <property type="entry name" value="TRNA MODIFICATION GTPASE GTPBP3"/>
    <property type="match status" value="1"/>
</dbReference>
<dbReference type="PANTHER" id="PTHR42714:SF2">
    <property type="entry name" value="TRNA MODIFICATION GTPASE GTPBP3, MITOCHONDRIAL"/>
    <property type="match status" value="1"/>
</dbReference>
<dbReference type="Pfam" id="PF01926">
    <property type="entry name" value="MMR_HSR1"/>
    <property type="match status" value="1"/>
</dbReference>
<dbReference type="Pfam" id="PF12631">
    <property type="entry name" value="MnmE_helical"/>
    <property type="match status" value="1"/>
</dbReference>
<dbReference type="Pfam" id="PF10396">
    <property type="entry name" value="TrmE_N"/>
    <property type="match status" value="1"/>
</dbReference>
<dbReference type="SUPFAM" id="SSF52540">
    <property type="entry name" value="P-loop containing nucleoside triphosphate hydrolases"/>
    <property type="match status" value="1"/>
</dbReference>
<dbReference type="SUPFAM" id="SSF116878">
    <property type="entry name" value="TrmE connector domain"/>
    <property type="match status" value="1"/>
</dbReference>
<dbReference type="PROSITE" id="PS51709">
    <property type="entry name" value="G_TRME"/>
    <property type="match status" value="1"/>
</dbReference>
<reference key="1">
    <citation type="submission" date="2003-03" db="EMBL/GenBank/DDBJ databases">
        <title>The complete genome sequence of Neisseria gonorrhoeae.</title>
        <authorList>
            <person name="Lewis L.A."/>
            <person name="Gillaspy A.F."/>
            <person name="McLaughlin R.E."/>
            <person name="Gipson M."/>
            <person name="Ducey T.F."/>
            <person name="Ownbey T."/>
            <person name="Hartman K."/>
            <person name="Nydick C."/>
            <person name="Carson M.B."/>
            <person name="Vaughn J."/>
            <person name="Thomson C."/>
            <person name="Song L."/>
            <person name="Lin S."/>
            <person name="Yuan X."/>
            <person name="Najar F."/>
            <person name="Zhan M."/>
            <person name="Ren Q."/>
            <person name="Zhu H."/>
            <person name="Qi S."/>
            <person name="Kenton S.M."/>
            <person name="Lai H."/>
            <person name="White J.D."/>
            <person name="Clifton S."/>
            <person name="Roe B.A."/>
            <person name="Dyer D.W."/>
        </authorList>
    </citation>
    <scope>NUCLEOTIDE SEQUENCE [LARGE SCALE GENOMIC DNA]</scope>
    <source>
        <strain>ATCC 700825 / FA 1090</strain>
    </source>
</reference>
<proteinExistence type="inferred from homology"/>
<feature type="chain" id="PRO_0000345848" description="tRNA modification GTPase MnmE">
    <location>
        <begin position="1"/>
        <end position="448"/>
    </location>
</feature>
<feature type="domain" description="TrmE-type G">
    <location>
        <begin position="216"/>
        <end position="373"/>
    </location>
</feature>
<feature type="binding site" evidence="1">
    <location>
        <position position="24"/>
    </location>
    <ligand>
        <name>(6S)-5-formyl-5,6,7,8-tetrahydrofolate</name>
        <dbReference type="ChEBI" id="CHEBI:57457"/>
    </ligand>
</feature>
<feature type="binding site" evidence="1">
    <location>
        <position position="81"/>
    </location>
    <ligand>
        <name>(6S)-5-formyl-5,6,7,8-tetrahydrofolate</name>
        <dbReference type="ChEBI" id="CHEBI:57457"/>
    </ligand>
</feature>
<feature type="binding site" evidence="1">
    <location>
        <position position="120"/>
    </location>
    <ligand>
        <name>(6S)-5-formyl-5,6,7,8-tetrahydrofolate</name>
        <dbReference type="ChEBI" id="CHEBI:57457"/>
    </ligand>
</feature>
<feature type="binding site" evidence="1">
    <location>
        <begin position="226"/>
        <end position="231"/>
    </location>
    <ligand>
        <name>GTP</name>
        <dbReference type="ChEBI" id="CHEBI:37565"/>
    </ligand>
</feature>
<feature type="binding site" evidence="1">
    <location>
        <position position="226"/>
    </location>
    <ligand>
        <name>K(+)</name>
        <dbReference type="ChEBI" id="CHEBI:29103"/>
    </ligand>
</feature>
<feature type="binding site" evidence="1">
    <location>
        <position position="230"/>
    </location>
    <ligand>
        <name>Mg(2+)</name>
        <dbReference type="ChEBI" id="CHEBI:18420"/>
    </ligand>
</feature>
<feature type="binding site" evidence="1">
    <location>
        <begin position="245"/>
        <end position="251"/>
    </location>
    <ligand>
        <name>GTP</name>
        <dbReference type="ChEBI" id="CHEBI:37565"/>
    </ligand>
</feature>
<feature type="binding site" evidence="1">
    <location>
        <position position="245"/>
    </location>
    <ligand>
        <name>K(+)</name>
        <dbReference type="ChEBI" id="CHEBI:29103"/>
    </ligand>
</feature>
<feature type="binding site" evidence="1">
    <location>
        <position position="247"/>
    </location>
    <ligand>
        <name>K(+)</name>
        <dbReference type="ChEBI" id="CHEBI:29103"/>
    </ligand>
</feature>
<feature type="binding site" evidence="1">
    <location>
        <position position="250"/>
    </location>
    <ligand>
        <name>K(+)</name>
        <dbReference type="ChEBI" id="CHEBI:29103"/>
    </ligand>
</feature>
<feature type="binding site" evidence="1">
    <location>
        <position position="251"/>
    </location>
    <ligand>
        <name>Mg(2+)</name>
        <dbReference type="ChEBI" id="CHEBI:18420"/>
    </ligand>
</feature>
<feature type="binding site" evidence="1">
    <location>
        <begin position="270"/>
        <end position="273"/>
    </location>
    <ligand>
        <name>GTP</name>
        <dbReference type="ChEBI" id="CHEBI:37565"/>
    </ligand>
</feature>
<feature type="binding site" evidence="1">
    <location>
        <position position="448"/>
    </location>
    <ligand>
        <name>(6S)-5-formyl-5,6,7,8-tetrahydrofolate</name>
        <dbReference type="ChEBI" id="CHEBI:57457"/>
    </ligand>
</feature>
<keyword id="KW-0963">Cytoplasm</keyword>
<keyword id="KW-0342">GTP-binding</keyword>
<keyword id="KW-0378">Hydrolase</keyword>
<keyword id="KW-0460">Magnesium</keyword>
<keyword id="KW-0479">Metal-binding</keyword>
<keyword id="KW-0547">Nucleotide-binding</keyword>
<keyword id="KW-0630">Potassium</keyword>
<keyword id="KW-1185">Reference proteome</keyword>
<keyword id="KW-0819">tRNA processing</keyword>
<protein>
    <recommendedName>
        <fullName evidence="1">tRNA modification GTPase MnmE</fullName>
        <ecNumber evidence="1">3.6.-.-</ecNumber>
    </recommendedName>
</protein>
<name>MNME_NEIG1</name>
<gene>
    <name evidence="1" type="primary">mnmE</name>
    <name evidence="1" type="synonym">trmE</name>
    <name type="ordered locus">NGO_2107</name>
</gene>
<organism>
    <name type="scientific">Neisseria gonorrhoeae (strain ATCC 700825 / FA 1090)</name>
    <dbReference type="NCBI Taxonomy" id="242231"/>
    <lineage>
        <taxon>Bacteria</taxon>
        <taxon>Pseudomonadati</taxon>
        <taxon>Pseudomonadota</taxon>
        <taxon>Betaproteobacteria</taxon>
        <taxon>Neisseriales</taxon>
        <taxon>Neisseriaceae</taxon>
        <taxon>Neisseria</taxon>
    </lineage>
</organism>
<comment type="function">
    <text evidence="1">Exhibits a very high intrinsic GTPase hydrolysis rate. Involved in the addition of a carboxymethylaminomethyl (cmnm) group at the wobble position (U34) of certain tRNAs, forming tRNA-cmnm(5)s(2)U34.</text>
</comment>
<comment type="cofactor">
    <cofactor evidence="1">
        <name>K(+)</name>
        <dbReference type="ChEBI" id="CHEBI:29103"/>
    </cofactor>
    <text evidence="1">Binds 1 potassium ion per subunit.</text>
</comment>
<comment type="subunit">
    <text evidence="1">Homodimer. Heterotetramer of two MnmE and two MnmG subunits.</text>
</comment>
<comment type="subcellular location">
    <subcellularLocation>
        <location evidence="1">Cytoplasm</location>
    </subcellularLocation>
</comment>
<comment type="similarity">
    <text evidence="1">Belongs to the TRAFAC class TrmE-Era-EngA-EngB-Septin-like GTPase superfamily. TrmE GTPase family.</text>
</comment>
<accession>Q5F529</accession>
<evidence type="ECO:0000255" key="1">
    <source>
        <dbReference type="HAMAP-Rule" id="MF_00379"/>
    </source>
</evidence>
<sequence>MSDNVPTIAAVATAPGRGGVGVIRISGKNLLPMAQALCGKTPEPRVATYADFTDADGQAIDSGLLLFFAAPASFTGEDVIELQGHGGPVVMEMLLNRCLELGARLAEPGEFTKRAFLNDKLDLAQAEGVADLIDASGRSAARLALRSLKGDFSRRIHGLVEGLITLRMLVEAALDFPEEDIDFLEAADARGKLDGLRRAVDDVLANAQQGAILREGLNVVLVGAPNVGKSSLLNALAGDEVAIVTDIAGTTRDAVRERILIDGVPVHIVDTAGLRETDDVVERIGIERSRKAVSEADVALVLVDPREGLNEKTRMILDTLPSDLKRIEIHSKSDLHAHAAGGFGTGAETVIALSAKTGDGLDALKRTLLCEAGWQGESEGLFLARTRHVNALKAAQEELSLAALCGNHQIELFAEHLRLAQVACGEITGEFTADDLLGVIFSRFCIGK</sequence>